<organism>
    <name type="scientific">Herminiimonas arsenicoxydans</name>
    <dbReference type="NCBI Taxonomy" id="204773"/>
    <lineage>
        <taxon>Bacteria</taxon>
        <taxon>Pseudomonadati</taxon>
        <taxon>Pseudomonadota</taxon>
        <taxon>Betaproteobacteria</taxon>
        <taxon>Burkholderiales</taxon>
        <taxon>Oxalobacteraceae</taxon>
        <taxon>Herminiimonas</taxon>
    </lineage>
</organism>
<accession>A4G995</accession>
<gene>
    <name evidence="1" type="primary">secB</name>
    <name type="ordered locus">HEAR2972</name>
</gene>
<sequence>MADENLQPVFQIQRVYLKDLSLEQPNSPAIFLEQDAPVIEVAVDVGAEQLAEGLFESTVTITVTAKINDKVAFLVEAKQAGIFEARNIPDEQLDPLIGIGCPSTIYPYLRANIADAITRAGFPPVHLSEINFEVFYQQRLEALAQQHASNGSGIVMPDGSAAQH</sequence>
<proteinExistence type="inferred from homology"/>
<dbReference type="EMBL" id="CU207211">
    <property type="protein sequence ID" value="CAL63082.1"/>
    <property type="molecule type" value="Genomic_DNA"/>
</dbReference>
<dbReference type="SMR" id="A4G995"/>
<dbReference type="STRING" id="204773.HEAR2972"/>
<dbReference type="KEGG" id="har:HEAR2972"/>
<dbReference type="eggNOG" id="COG1952">
    <property type="taxonomic scope" value="Bacteria"/>
</dbReference>
<dbReference type="HOGENOM" id="CLU_111574_1_0_4"/>
<dbReference type="OrthoDB" id="9795145at2"/>
<dbReference type="Proteomes" id="UP000006697">
    <property type="component" value="Chromosome"/>
</dbReference>
<dbReference type="GO" id="GO:0005737">
    <property type="term" value="C:cytoplasm"/>
    <property type="evidence" value="ECO:0007669"/>
    <property type="project" value="UniProtKB-SubCell"/>
</dbReference>
<dbReference type="GO" id="GO:0051082">
    <property type="term" value="F:unfolded protein binding"/>
    <property type="evidence" value="ECO:0007669"/>
    <property type="project" value="InterPro"/>
</dbReference>
<dbReference type="GO" id="GO:0006457">
    <property type="term" value="P:protein folding"/>
    <property type="evidence" value="ECO:0007669"/>
    <property type="project" value="UniProtKB-UniRule"/>
</dbReference>
<dbReference type="GO" id="GO:0051262">
    <property type="term" value="P:protein tetramerization"/>
    <property type="evidence" value="ECO:0007669"/>
    <property type="project" value="InterPro"/>
</dbReference>
<dbReference type="GO" id="GO:0015031">
    <property type="term" value="P:protein transport"/>
    <property type="evidence" value="ECO:0007669"/>
    <property type="project" value="UniProtKB-UniRule"/>
</dbReference>
<dbReference type="Gene3D" id="3.10.420.10">
    <property type="entry name" value="SecB-like"/>
    <property type="match status" value="1"/>
</dbReference>
<dbReference type="HAMAP" id="MF_00821">
    <property type="entry name" value="SecB"/>
    <property type="match status" value="1"/>
</dbReference>
<dbReference type="InterPro" id="IPR003708">
    <property type="entry name" value="SecB"/>
</dbReference>
<dbReference type="InterPro" id="IPR035958">
    <property type="entry name" value="SecB-like_sf"/>
</dbReference>
<dbReference type="NCBIfam" id="NF004394">
    <property type="entry name" value="PRK05751.1-5"/>
    <property type="match status" value="1"/>
</dbReference>
<dbReference type="NCBIfam" id="TIGR00809">
    <property type="entry name" value="secB"/>
    <property type="match status" value="1"/>
</dbReference>
<dbReference type="PANTHER" id="PTHR36918">
    <property type="match status" value="1"/>
</dbReference>
<dbReference type="PANTHER" id="PTHR36918:SF1">
    <property type="entry name" value="PROTEIN-EXPORT PROTEIN SECB"/>
    <property type="match status" value="1"/>
</dbReference>
<dbReference type="Pfam" id="PF02556">
    <property type="entry name" value="SecB"/>
    <property type="match status" value="1"/>
</dbReference>
<dbReference type="PRINTS" id="PR01594">
    <property type="entry name" value="SECBCHAPRONE"/>
</dbReference>
<dbReference type="SUPFAM" id="SSF54611">
    <property type="entry name" value="SecB-like"/>
    <property type="match status" value="1"/>
</dbReference>
<evidence type="ECO:0000255" key="1">
    <source>
        <dbReference type="HAMAP-Rule" id="MF_00821"/>
    </source>
</evidence>
<comment type="function">
    <text evidence="1">One of the proteins required for the normal export of preproteins out of the cell cytoplasm. It is a molecular chaperone that binds to a subset of precursor proteins, maintaining them in a translocation-competent state. It also specifically binds to its receptor SecA.</text>
</comment>
<comment type="subunit">
    <text evidence="1">Homotetramer, a dimer of dimers. One homotetramer interacts with 1 SecA dimer.</text>
</comment>
<comment type="subcellular location">
    <subcellularLocation>
        <location evidence="1">Cytoplasm</location>
    </subcellularLocation>
</comment>
<comment type="similarity">
    <text evidence="1">Belongs to the SecB family.</text>
</comment>
<name>SECB_HERAR</name>
<protein>
    <recommendedName>
        <fullName evidence="1">Protein-export protein SecB</fullName>
    </recommendedName>
</protein>
<feature type="chain" id="PRO_1000062480" description="Protein-export protein SecB">
    <location>
        <begin position="1"/>
        <end position="164"/>
    </location>
</feature>
<keyword id="KW-0143">Chaperone</keyword>
<keyword id="KW-0963">Cytoplasm</keyword>
<keyword id="KW-0653">Protein transport</keyword>
<keyword id="KW-1185">Reference proteome</keyword>
<keyword id="KW-0811">Translocation</keyword>
<keyword id="KW-0813">Transport</keyword>
<reference key="1">
    <citation type="journal article" date="2007" name="PLoS Genet.">
        <title>A tale of two oxidation states: bacterial colonization of arsenic-rich environments.</title>
        <authorList>
            <person name="Muller D."/>
            <person name="Medigue C."/>
            <person name="Koechler S."/>
            <person name="Barbe V."/>
            <person name="Barakat M."/>
            <person name="Talla E."/>
            <person name="Bonnefoy V."/>
            <person name="Krin E."/>
            <person name="Arsene-Ploetze F."/>
            <person name="Carapito C."/>
            <person name="Chandler M."/>
            <person name="Cournoyer B."/>
            <person name="Cruveiller S."/>
            <person name="Dossat C."/>
            <person name="Duval S."/>
            <person name="Heymann M."/>
            <person name="Leize E."/>
            <person name="Lieutaud A."/>
            <person name="Lievremont D."/>
            <person name="Makita Y."/>
            <person name="Mangenot S."/>
            <person name="Nitschke W."/>
            <person name="Ortet P."/>
            <person name="Perdrial N."/>
            <person name="Schoepp B."/>
            <person name="Siguier P."/>
            <person name="Simeonova D.D."/>
            <person name="Rouy Z."/>
            <person name="Segurens B."/>
            <person name="Turlin E."/>
            <person name="Vallenet D."/>
            <person name="van Dorsselaer A."/>
            <person name="Weiss S."/>
            <person name="Weissenbach J."/>
            <person name="Lett M.-C."/>
            <person name="Danchin A."/>
            <person name="Bertin P.N."/>
        </authorList>
    </citation>
    <scope>NUCLEOTIDE SEQUENCE [LARGE SCALE GENOMIC DNA]</scope>
    <source>
        <strain>ULPAs1</strain>
    </source>
</reference>